<comment type="function">
    <text evidence="1">Catalyzes the NADPH-dependent reduction of N-acetyl-5-glutamyl phosphate to yield N-acetyl-L-glutamate 5-semialdehyde.</text>
</comment>
<comment type="catalytic activity">
    <reaction evidence="1">
        <text>N-acetyl-L-glutamate 5-semialdehyde + phosphate + NADP(+) = N-acetyl-L-glutamyl 5-phosphate + NADPH + H(+)</text>
        <dbReference type="Rhea" id="RHEA:21588"/>
        <dbReference type="ChEBI" id="CHEBI:15378"/>
        <dbReference type="ChEBI" id="CHEBI:29123"/>
        <dbReference type="ChEBI" id="CHEBI:43474"/>
        <dbReference type="ChEBI" id="CHEBI:57783"/>
        <dbReference type="ChEBI" id="CHEBI:57936"/>
        <dbReference type="ChEBI" id="CHEBI:58349"/>
        <dbReference type="EC" id="1.2.1.38"/>
    </reaction>
</comment>
<comment type="pathway">
    <text evidence="1">Amino-acid biosynthesis; L-arginine biosynthesis; N(2)-acetyl-L-ornithine from L-glutamate: step 3/4.</text>
</comment>
<comment type="subcellular location">
    <subcellularLocation>
        <location evidence="1">Cytoplasm</location>
    </subcellularLocation>
</comment>
<comment type="similarity">
    <text evidence="1">Belongs to the NAGSA dehydrogenase family. Type 2 subfamily.</text>
</comment>
<feature type="chain" id="PRO_1000137117" description="N-acetyl-gamma-glutamyl-phosphate reductase">
    <location>
        <begin position="1"/>
        <end position="310"/>
    </location>
</feature>
<feature type="active site" evidence="1">
    <location>
        <position position="117"/>
    </location>
</feature>
<proteinExistence type="inferred from homology"/>
<name>ARGC_RHILW</name>
<sequence>MAPKIFIDGEHGTTGLQIRTRMAGRRDVELLSIPEAERRNAAMREDMLNSADIAILCLPDDASKEAVQMVSANNNVRVIDTSTAFRVNPGWAYGFAEMDGAQADRIKAARFVANPGCYPTGAIGLIRPLRAAGLLPDGYPVTVNAVSGYTGGGKQMIAQMENPDHPDAITAPHFLYGLPLTHKHVPEMTVHGLLDRAPIFSPSVGKFAQGMIVQVPLHLGDLAEGTTMESIHAALVAHYAGQEIVTVVPLAESKALSRVNAVELEGKDTMKLFVFGTPGASQVNLVALLDNLGKGASGAAVQNMDLMLAS</sequence>
<keyword id="KW-0028">Amino-acid biosynthesis</keyword>
<keyword id="KW-0055">Arginine biosynthesis</keyword>
<keyword id="KW-0963">Cytoplasm</keyword>
<keyword id="KW-0521">NADP</keyword>
<keyword id="KW-0560">Oxidoreductase</keyword>
<keyword id="KW-1185">Reference proteome</keyword>
<gene>
    <name evidence="1" type="primary">argC</name>
    <name type="ordered locus">Rleg2_1230</name>
</gene>
<reference key="1">
    <citation type="journal article" date="2010" name="Stand. Genomic Sci.">
        <title>Complete genome sequence of Rhizobium leguminosarum bv trifolii strain WSM2304, an effective microsymbiont of the South American clover Trifolium polymorphum.</title>
        <authorList>
            <person name="Reeve W."/>
            <person name="O'Hara G."/>
            <person name="Chain P."/>
            <person name="Ardley J."/>
            <person name="Brau L."/>
            <person name="Nandesena K."/>
            <person name="Tiwari R."/>
            <person name="Malfatti S."/>
            <person name="Kiss H."/>
            <person name="Lapidus A."/>
            <person name="Copeland A."/>
            <person name="Nolan M."/>
            <person name="Land M."/>
            <person name="Ivanova N."/>
            <person name="Mavromatis K."/>
            <person name="Markowitz V."/>
            <person name="Kyrpides N."/>
            <person name="Melino V."/>
            <person name="Denton M."/>
            <person name="Yates R."/>
            <person name="Howieson J."/>
        </authorList>
    </citation>
    <scope>NUCLEOTIDE SEQUENCE [LARGE SCALE GENOMIC DNA]</scope>
    <source>
        <strain>WSM2304</strain>
    </source>
</reference>
<accession>B5ZXZ1</accession>
<organism>
    <name type="scientific">Rhizobium leguminosarum bv. trifolii (strain WSM2304)</name>
    <dbReference type="NCBI Taxonomy" id="395492"/>
    <lineage>
        <taxon>Bacteria</taxon>
        <taxon>Pseudomonadati</taxon>
        <taxon>Pseudomonadota</taxon>
        <taxon>Alphaproteobacteria</taxon>
        <taxon>Hyphomicrobiales</taxon>
        <taxon>Rhizobiaceae</taxon>
        <taxon>Rhizobium/Agrobacterium group</taxon>
        <taxon>Rhizobium</taxon>
    </lineage>
</organism>
<dbReference type="EC" id="1.2.1.38" evidence="1"/>
<dbReference type="EMBL" id="CP001191">
    <property type="protein sequence ID" value="ACI54524.1"/>
    <property type="molecule type" value="Genomic_DNA"/>
</dbReference>
<dbReference type="RefSeq" id="WP_012557308.1">
    <property type="nucleotide sequence ID" value="NC_011369.1"/>
</dbReference>
<dbReference type="SMR" id="B5ZXZ1"/>
<dbReference type="STRING" id="395492.Rleg2_1230"/>
<dbReference type="KEGG" id="rlt:Rleg2_1230"/>
<dbReference type="eggNOG" id="COG0002">
    <property type="taxonomic scope" value="Bacteria"/>
</dbReference>
<dbReference type="HOGENOM" id="CLU_077118_0_0_5"/>
<dbReference type="UniPathway" id="UPA00068">
    <property type="reaction ID" value="UER00108"/>
</dbReference>
<dbReference type="Proteomes" id="UP000008330">
    <property type="component" value="Chromosome"/>
</dbReference>
<dbReference type="GO" id="GO:0005737">
    <property type="term" value="C:cytoplasm"/>
    <property type="evidence" value="ECO:0007669"/>
    <property type="project" value="UniProtKB-SubCell"/>
</dbReference>
<dbReference type="GO" id="GO:0003942">
    <property type="term" value="F:N-acetyl-gamma-glutamyl-phosphate reductase activity"/>
    <property type="evidence" value="ECO:0007669"/>
    <property type="project" value="UniProtKB-UniRule"/>
</dbReference>
<dbReference type="GO" id="GO:0051287">
    <property type="term" value="F:NAD binding"/>
    <property type="evidence" value="ECO:0007669"/>
    <property type="project" value="InterPro"/>
</dbReference>
<dbReference type="GO" id="GO:0006526">
    <property type="term" value="P:L-arginine biosynthetic process"/>
    <property type="evidence" value="ECO:0007669"/>
    <property type="project" value="UniProtKB-UniRule"/>
</dbReference>
<dbReference type="CDD" id="cd23935">
    <property type="entry name" value="AGPR_2_C"/>
    <property type="match status" value="1"/>
</dbReference>
<dbReference type="CDD" id="cd17896">
    <property type="entry name" value="AGPR_2_N"/>
    <property type="match status" value="1"/>
</dbReference>
<dbReference type="Gene3D" id="3.30.360.10">
    <property type="entry name" value="Dihydrodipicolinate Reductase, domain 2"/>
    <property type="match status" value="1"/>
</dbReference>
<dbReference type="Gene3D" id="3.40.50.720">
    <property type="entry name" value="NAD(P)-binding Rossmann-like Domain"/>
    <property type="match status" value="1"/>
</dbReference>
<dbReference type="HAMAP" id="MF_01110">
    <property type="entry name" value="ArgC_type2"/>
    <property type="match status" value="1"/>
</dbReference>
<dbReference type="InterPro" id="IPR023013">
    <property type="entry name" value="AGPR_AS"/>
</dbReference>
<dbReference type="InterPro" id="IPR010136">
    <property type="entry name" value="AGPR_type-2"/>
</dbReference>
<dbReference type="InterPro" id="IPR036291">
    <property type="entry name" value="NAD(P)-bd_dom_sf"/>
</dbReference>
<dbReference type="InterPro" id="IPR050085">
    <property type="entry name" value="NAGSA_dehydrogenase"/>
</dbReference>
<dbReference type="InterPro" id="IPR000534">
    <property type="entry name" value="Semialdehyde_DH_NAD-bd"/>
</dbReference>
<dbReference type="NCBIfam" id="TIGR01851">
    <property type="entry name" value="argC_other"/>
    <property type="match status" value="1"/>
</dbReference>
<dbReference type="PANTHER" id="PTHR32338:SF10">
    <property type="entry name" value="N-ACETYL-GAMMA-GLUTAMYL-PHOSPHATE REDUCTASE, CHLOROPLASTIC-RELATED"/>
    <property type="match status" value="1"/>
</dbReference>
<dbReference type="PANTHER" id="PTHR32338">
    <property type="entry name" value="N-ACETYL-GAMMA-GLUTAMYL-PHOSPHATE REDUCTASE, CHLOROPLASTIC-RELATED-RELATED"/>
    <property type="match status" value="1"/>
</dbReference>
<dbReference type="Pfam" id="PF01118">
    <property type="entry name" value="Semialdhyde_dh"/>
    <property type="match status" value="1"/>
</dbReference>
<dbReference type="Pfam" id="PF22698">
    <property type="entry name" value="Semialdhyde_dhC_1"/>
    <property type="match status" value="1"/>
</dbReference>
<dbReference type="SMART" id="SM00859">
    <property type="entry name" value="Semialdhyde_dh"/>
    <property type="match status" value="1"/>
</dbReference>
<dbReference type="SUPFAM" id="SSF55347">
    <property type="entry name" value="Glyceraldehyde-3-phosphate dehydrogenase-like, C-terminal domain"/>
    <property type="match status" value="1"/>
</dbReference>
<dbReference type="SUPFAM" id="SSF51735">
    <property type="entry name" value="NAD(P)-binding Rossmann-fold domains"/>
    <property type="match status" value="1"/>
</dbReference>
<dbReference type="PROSITE" id="PS01224">
    <property type="entry name" value="ARGC"/>
    <property type="match status" value="1"/>
</dbReference>
<protein>
    <recommendedName>
        <fullName evidence="1">N-acetyl-gamma-glutamyl-phosphate reductase</fullName>
        <shortName evidence="1">AGPR</shortName>
        <ecNumber evidence="1">1.2.1.38</ecNumber>
    </recommendedName>
    <alternativeName>
        <fullName evidence="1">N-acetyl-glutamate semialdehyde dehydrogenase</fullName>
        <shortName evidence="1">NAGSA dehydrogenase</shortName>
    </alternativeName>
</protein>
<evidence type="ECO:0000255" key="1">
    <source>
        <dbReference type="HAMAP-Rule" id="MF_01110"/>
    </source>
</evidence>